<sequence>MTLPKIKHVRAWFIGGATAEKGAGGGDYHDQGGNHWIDDHIATPMSKYRDYEQSRQSFGINVLGTLIVEVEAENGQTGFAVSTAGEMGCFIVEKHLNRFIEGKCVSDIKLIHDQMLGATMYYSGSGGLVMNTISCVDLALWDLFGKVVGLPVYKLLGGAVRDEIQFYATGARPDLAKEMGFIGGKMPTHWGPHDGDAGIRKDAAMVADMREKCGPDFWLMLDCWMSQDVNYATKLAHACAPFNLKWIEECLPPQQYEGYRELKRNAPAGMMVTSGEHHGTLQSFRTLAETGIDIMQPDVGWCGGLTTLVEIAALAKSRGQLVVPHGSSVYSHHAVITFTNTPFSEFLMTSPDCSTLRPQFDPILLDEPVPVNGRIHKSVLDKPGFGVELNRDCHLKRPYSH</sequence>
<dbReference type="EC" id="4.2.1.90" evidence="1"/>
<dbReference type="EMBL" id="CP001127">
    <property type="protein sequence ID" value="ACF90733.1"/>
    <property type="molecule type" value="Genomic_DNA"/>
</dbReference>
<dbReference type="RefSeq" id="WP_001530644.1">
    <property type="nucleotide sequence ID" value="NC_011094.1"/>
</dbReference>
<dbReference type="SMR" id="B4TPH4"/>
<dbReference type="KEGG" id="sew:SeSA_A2519"/>
<dbReference type="HOGENOM" id="CLU_030273_1_0_6"/>
<dbReference type="Proteomes" id="UP000001865">
    <property type="component" value="Chromosome"/>
</dbReference>
<dbReference type="GO" id="GO:0050032">
    <property type="term" value="F:L-rhamnonate dehydratase activity"/>
    <property type="evidence" value="ECO:0007669"/>
    <property type="project" value="UniProtKB-UniRule"/>
</dbReference>
<dbReference type="GO" id="GO:0000287">
    <property type="term" value="F:magnesium ion binding"/>
    <property type="evidence" value="ECO:0007669"/>
    <property type="project" value="UniProtKB-UniRule"/>
</dbReference>
<dbReference type="GO" id="GO:0009063">
    <property type="term" value="P:amino acid catabolic process"/>
    <property type="evidence" value="ECO:0007669"/>
    <property type="project" value="InterPro"/>
</dbReference>
<dbReference type="GO" id="GO:0016052">
    <property type="term" value="P:carbohydrate catabolic process"/>
    <property type="evidence" value="ECO:0007669"/>
    <property type="project" value="TreeGrafter"/>
</dbReference>
<dbReference type="CDD" id="cd03327">
    <property type="entry name" value="MR_like_2"/>
    <property type="match status" value="1"/>
</dbReference>
<dbReference type="FunFam" id="3.30.390.10:FF:000007">
    <property type="entry name" value="L-rhamnonate dehydratase"/>
    <property type="match status" value="1"/>
</dbReference>
<dbReference type="FunFam" id="3.20.20.120:FF:000005">
    <property type="entry name" value="Putative L-rhamnonate dehydratase"/>
    <property type="match status" value="1"/>
</dbReference>
<dbReference type="Gene3D" id="3.20.20.120">
    <property type="entry name" value="Enolase-like C-terminal domain"/>
    <property type="match status" value="1"/>
</dbReference>
<dbReference type="Gene3D" id="3.30.390.10">
    <property type="entry name" value="Enolase-like, N-terminal domain"/>
    <property type="match status" value="1"/>
</dbReference>
<dbReference type="HAMAP" id="MF_01288">
    <property type="entry name" value="Rhamnon_dehydrat"/>
    <property type="match status" value="1"/>
</dbReference>
<dbReference type="InterPro" id="IPR036849">
    <property type="entry name" value="Enolase-like_C_sf"/>
</dbReference>
<dbReference type="InterPro" id="IPR029017">
    <property type="entry name" value="Enolase-like_N"/>
</dbReference>
<dbReference type="InterPro" id="IPR029065">
    <property type="entry name" value="Enolase_C-like"/>
</dbReference>
<dbReference type="InterPro" id="IPR023444">
    <property type="entry name" value="L-Rhamnon_dehydrat"/>
</dbReference>
<dbReference type="InterPro" id="IPR018110">
    <property type="entry name" value="Mandel_Rmase/mucon_lact_enz_CS"/>
</dbReference>
<dbReference type="InterPro" id="IPR013342">
    <property type="entry name" value="Mandelate_racemase_C"/>
</dbReference>
<dbReference type="InterPro" id="IPR013341">
    <property type="entry name" value="Mandelate_racemase_N_dom"/>
</dbReference>
<dbReference type="InterPro" id="IPR046945">
    <property type="entry name" value="RHMD-like"/>
</dbReference>
<dbReference type="NCBIfam" id="NF011968">
    <property type="entry name" value="PRK15440.1"/>
    <property type="match status" value="1"/>
</dbReference>
<dbReference type="PANTHER" id="PTHR13794">
    <property type="entry name" value="ENOLASE SUPERFAMILY, MANDELATE RACEMASE"/>
    <property type="match status" value="1"/>
</dbReference>
<dbReference type="PANTHER" id="PTHR13794:SF58">
    <property type="entry name" value="MITOCHONDRIAL ENOLASE SUPERFAMILY MEMBER 1"/>
    <property type="match status" value="1"/>
</dbReference>
<dbReference type="Pfam" id="PF13378">
    <property type="entry name" value="MR_MLE_C"/>
    <property type="match status" value="1"/>
</dbReference>
<dbReference type="Pfam" id="PF02746">
    <property type="entry name" value="MR_MLE_N"/>
    <property type="match status" value="1"/>
</dbReference>
<dbReference type="SFLD" id="SFLDG00179">
    <property type="entry name" value="mandelate_racemase"/>
    <property type="match status" value="1"/>
</dbReference>
<dbReference type="SFLD" id="SFLDF00006">
    <property type="entry name" value="rhamnonate_dehydratase"/>
    <property type="match status" value="1"/>
</dbReference>
<dbReference type="SMART" id="SM00922">
    <property type="entry name" value="MR_MLE"/>
    <property type="match status" value="1"/>
</dbReference>
<dbReference type="SUPFAM" id="SSF51604">
    <property type="entry name" value="Enolase C-terminal domain-like"/>
    <property type="match status" value="1"/>
</dbReference>
<dbReference type="SUPFAM" id="SSF54826">
    <property type="entry name" value="Enolase N-terminal domain-like"/>
    <property type="match status" value="1"/>
</dbReference>
<dbReference type="PROSITE" id="PS00908">
    <property type="entry name" value="MR_MLE_1"/>
    <property type="match status" value="1"/>
</dbReference>
<accession>B4TPH4</accession>
<reference key="1">
    <citation type="journal article" date="2011" name="J. Bacteriol.">
        <title>Comparative genomics of 28 Salmonella enterica isolates: evidence for CRISPR-mediated adaptive sublineage evolution.</title>
        <authorList>
            <person name="Fricke W.F."/>
            <person name="Mammel M.K."/>
            <person name="McDermott P.F."/>
            <person name="Tartera C."/>
            <person name="White D.G."/>
            <person name="Leclerc J.E."/>
            <person name="Ravel J."/>
            <person name="Cebula T.A."/>
        </authorList>
    </citation>
    <scope>NUCLEOTIDE SEQUENCE [LARGE SCALE GENOMIC DNA]</scope>
    <source>
        <strain>CVM19633</strain>
    </source>
</reference>
<comment type="function">
    <text evidence="1">Catalyzes the dehydration of L-rhamnonate to 2-keto-3-deoxy-L-rhamnonate (KDR).</text>
</comment>
<comment type="catalytic activity">
    <reaction evidence="1">
        <text>L-rhamnonate = 2-dehydro-3-deoxy-L-rhamnonate + H2O</text>
        <dbReference type="Rhea" id="RHEA:23080"/>
        <dbReference type="ChEBI" id="CHEBI:15377"/>
        <dbReference type="ChEBI" id="CHEBI:58118"/>
        <dbReference type="ChEBI" id="CHEBI:58371"/>
        <dbReference type="EC" id="4.2.1.90"/>
    </reaction>
</comment>
<comment type="cofactor">
    <cofactor evidence="1">
        <name>Mg(2+)</name>
        <dbReference type="ChEBI" id="CHEBI:18420"/>
    </cofactor>
    <text evidence="1">Binds 1 Mg(2+) ion per subunit.</text>
</comment>
<comment type="subunit">
    <text evidence="1">Homooctamer; tetramer of dimers.</text>
</comment>
<comment type="miscellaneous">
    <text evidence="1">Reaction proceeds via a syn dehydration.</text>
</comment>
<comment type="similarity">
    <text evidence="1">Belongs to the mandelate racemase/muconate lactonizing enzyme family. RhamD subfamily.</text>
</comment>
<name>RHMD_SALSV</name>
<organism>
    <name type="scientific">Salmonella schwarzengrund (strain CVM19633)</name>
    <dbReference type="NCBI Taxonomy" id="439843"/>
    <lineage>
        <taxon>Bacteria</taxon>
        <taxon>Pseudomonadati</taxon>
        <taxon>Pseudomonadota</taxon>
        <taxon>Gammaproteobacteria</taxon>
        <taxon>Enterobacterales</taxon>
        <taxon>Enterobacteriaceae</taxon>
        <taxon>Salmonella</taxon>
    </lineage>
</organism>
<evidence type="ECO:0000255" key="1">
    <source>
        <dbReference type="HAMAP-Rule" id="MF_01288"/>
    </source>
</evidence>
<feature type="chain" id="PRO_1000165267" description="L-rhamnonate dehydratase">
    <location>
        <begin position="1"/>
        <end position="401"/>
    </location>
</feature>
<feature type="active site" description="Proton acceptor" evidence="1">
    <location>
        <position position="325"/>
    </location>
</feature>
<feature type="binding site" evidence="1">
    <location>
        <position position="29"/>
    </location>
    <ligand>
        <name>substrate</name>
    </ligand>
</feature>
<feature type="binding site" evidence="1">
    <location>
        <position position="55"/>
    </location>
    <ligand>
        <name>substrate</name>
    </ligand>
</feature>
<feature type="binding site" evidence="1">
    <location>
        <position position="222"/>
    </location>
    <ligand>
        <name>Mg(2+)</name>
        <dbReference type="ChEBI" id="CHEBI:18420"/>
    </ligand>
</feature>
<feature type="binding site" evidence="1">
    <location>
        <position position="248"/>
    </location>
    <ligand>
        <name>Mg(2+)</name>
        <dbReference type="ChEBI" id="CHEBI:18420"/>
    </ligand>
</feature>
<feature type="binding site" evidence="1">
    <location>
        <position position="276"/>
    </location>
    <ligand>
        <name>Mg(2+)</name>
        <dbReference type="ChEBI" id="CHEBI:18420"/>
    </ligand>
</feature>
<feature type="binding site" evidence="1">
    <location>
        <position position="345"/>
    </location>
    <ligand>
        <name>substrate</name>
    </ligand>
</feature>
<feature type="site" description="Increases basicity of active site His" evidence="1">
    <location>
        <position position="298"/>
    </location>
</feature>
<feature type="site" description="Transition state stabilizer" evidence="1">
    <location>
        <position position="345"/>
    </location>
</feature>
<proteinExistence type="inferred from homology"/>
<gene>
    <name evidence="1" type="primary">rhmD</name>
    <name type="ordered locus">SeSA_A2519</name>
</gene>
<protein>
    <recommendedName>
        <fullName evidence="1">L-rhamnonate dehydratase</fullName>
        <shortName evidence="1">RhamD</shortName>
        <ecNumber evidence="1">4.2.1.90</ecNumber>
    </recommendedName>
</protein>
<keyword id="KW-0456">Lyase</keyword>
<keyword id="KW-0460">Magnesium</keyword>
<keyword id="KW-0479">Metal-binding</keyword>